<organism>
    <name type="scientific">Roseiflexus sp. (strain RS-1)</name>
    <dbReference type="NCBI Taxonomy" id="357808"/>
    <lineage>
        <taxon>Bacteria</taxon>
        <taxon>Bacillati</taxon>
        <taxon>Chloroflexota</taxon>
        <taxon>Chloroflexia</taxon>
        <taxon>Chloroflexales</taxon>
        <taxon>Roseiflexineae</taxon>
        <taxon>Roseiflexaceae</taxon>
        <taxon>Roseiflexus</taxon>
    </lineage>
</organism>
<proteinExistence type="inferred from homology"/>
<sequence>MKILVIHGPNLNMLGRREPEVYGSVTLDEIDAALRERATAAGATLLTIQSNHEGALIDFLQAEGWDADGIIINPGALTHYGLALRDALAMLKAPIIEVHLSNVYRREPFRHTSVVAPVATGQIAGLGWRGYLLALEWLLEEKRA</sequence>
<evidence type="ECO:0000255" key="1">
    <source>
        <dbReference type="HAMAP-Rule" id="MF_00169"/>
    </source>
</evidence>
<comment type="function">
    <text evidence="1">Catalyzes a trans-dehydration via an enolate intermediate.</text>
</comment>
<comment type="catalytic activity">
    <reaction evidence="1">
        <text>3-dehydroquinate = 3-dehydroshikimate + H2O</text>
        <dbReference type="Rhea" id="RHEA:21096"/>
        <dbReference type="ChEBI" id="CHEBI:15377"/>
        <dbReference type="ChEBI" id="CHEBI:16630"/>
        <dbReference type="ChEBI" id="CHEBI:32364"/>
        <dbReference type="EC" id="4.2.1.10"/>
    </reaction>
</comment>
<comment type="pathway">
    <text evidence="1">Metabolic intermediate biosynthesis; chorismate biosynthesis; chorismate from D-erythrose 4-phosphate and phosphoenolpyruvate: step 3/7.</text>
</comment>
<comment type="subunit">
    <text evidence="1">Homododecamer.</text>
</comment>
<comment type="similarity">
    <text evidence="1">Belongs to the type-II 3-dehydroquinase family.</text>
</comment>
<feature type="chain" id="PRO_1000023508" description="3-dehydroquinate dehydratase">
    <location>
        <begin position="1"/>
        <end position="144"/>
    </location>
</feature>
<feature type="active site" description="Proton acceptor" evidence="1">
    <location>
        <position position="22"/>
    </location>
</feature>
<feature type="active site" description="Proton donor" evidence="1">
    <location>
        <position position="99"/>
    </location>
</feature>
<feature type="binding site" evidence="1">
    <location>
        <position position="73"/>
    </location>
    <ligand>
        <name>substrate</name>
    </ligand>
</feature>
<feature type="binding site" evidence="1">
    <location>
        <position position="79"/>
    </location>
    <ligand>
        <name>substrate</name>
    </ligand>
</feature>
<feature type="binding site" evidence="1">
    <location>
        <position position="86"/>
    </location>
    <ligand>
        <name>substrate</name>
    </ligand>
</feature>
<feature type="binding site" evidence="1">
    <location>
        <begin position="100"/>
        <end position="101"/>
    </location>
    <ligand>
        <name>substrate</name>
    </ligand>
</feature>
<feature type="binding site" evidence="1">
    <location>
        <position position="110"/>
    </location>
    <ligand>
        <name>substrate</name>
    </ligand>
</feature>
<feature type="site" description="Transition state stabilizer" evidence="1">
    <location>
        <position position="17"/>
    </location>
</feature>
<keyword id="KW-0028">Amino-acid biosynthesis</keyword>
<keyword id="KW-0057">Aromatic amino acid biosynthesis</keyword>
<keyword id="KW-0456">Lyase</keyword>
<gene>
    <name evidence="1" type="primary">aroQ</name>
    <name type="ordered locus">RoseRS_3243</name>
</gene>
<accession>A5UYA1</accession>
<protein>
    <recommendedName>
        <fullName evidence="1">3-dehydroquinate dehydratase</fullName>
        <shortName evidence="1">3-dehydroquinase</shortName>
        <ecNumber evidence="1">4.2.1.10</ecNumber>
    </recommendedName>
    <alternativeName>
        <fullName evidence="1">Type II DHQase</fullName>
    </alternativeName>
</protein>
<name>AROQ_ROSS1</name>
<dbReference type="EC" id="4.2.1.10" evidence="1"/>
<dbReference type="EMBL" id="CP000686">
    <property type="protein sequence ID" value="ABQ91604.1"/>
    <property type="molecule type" value="Genomic_DNA"/>
</dbReference>
<dbReference type="RefSeq" id="WP_011957948.1">
    <property type="nucleotide sequence ID" value="NC_009523.1"/>
</dbReference>
<dbReference type="SMR" id="A5UYA1"/>
<dbReference type="STRING" id="357808.RoseRS_3243"/>
<dbReference type="KEGG" id="rrs:RoseRS_3243"/>
<dbReference type="eggNOG" id="COG0757">
    <property type="taxonomic scope" value="Bacteria"/>
</dbReference>
<dbReference type="HOGENOM" id="CLU_090968_1_0_0"/>
<dbReference type="OrthoDB" id="9790793at2"/>
<dbReference type="UniPathway" id="UPA00053">
    <property type="reaction ID" value="UER00086"/>
</dbReference>
<dbReference type="Proteomes" id="UP000006554">
    <property type="component" value="Chromosome"/>
</dbReference>
<dbReference type="GO" id="GO:0003855">
    <property type="term" value="F:3-dehydroquinate dehydratase activity"/>
    <property type="evidence" value="ECO:0007669"/>
    <property type="project" value="UniProtKB-UniRule"/>
</dbReference>
<dbReference type="GO" id="GO:0008652">
    <property type="term" value="P:amino acid biosynthetic process"/>
    <property type="evidence" value="ECO:0007669"/>
    <property type="project" value="UniProtKB-KW"/>
</dbReference>
<dbReference type="GO" id="GO:0009073">
    <property type="term" value="P:aromatic amino acid family biosynthetic process"/>
    <property type="evidence" value="ECO:0007669"/>
    <property type="project" value="UniProtKB-KW"/>
</dbReference>
<dbReference type="GO" id="GO:0009423">
    <property type="term" value="P:chorismate biosynthetic process"/>
    <property type="evidence" value="ECO:0007669"/>
    <property type="project" value="UniProtKB-UniRule"/>
</dbReference>
<dbReference type="GO" id="GO:0019631">
    <property type="term" value="P:quinate catabolic process"/>
    <property type="evidence" value="ECO:0007669"/>
    <property type="project" value="TreeGrafter"/>
</dbReference>
<dbReference type="CDD" id="cd00466">
    <property type="entry name" value="DHQase_II"/>
    <property type="match status" value="1"/>
</dbReference>
<dbReference type="Gene3D" id="3.40.50.9100">
    <property type="entry name" value="Dehydroquinase, class II"/>
    <property type="match status" value="1"/>
</dbReference>
<dbReference type="HAMAP" id="MF_00169">
    <property type="entry name" value="AroQ"/>
    <property type="match status" value="1"/>
</dbReference>
<dbReference type="InterPro" id="IPR001874">
    <property type="entry name" value="DHquinase_II"/>
</dbReference>
<dbReference type="InterPro" id="IPR018509">
    <property type="entry name" value="DHquinase_II_CS"/>
</dbReference>
<dbReference type="InterPro" id="IPR036441">
    <property type="entry name" value="DHquinase_II_sf"/>
</dbReference>
<dbReference type="NCBIfam" id="TIGR01088">
    <property type="entry name" value="aroQ"/>
    <property type="match status" value="1"/>
</dbReference>
<dbReference type="NCBIfam" id="NF003805">
    <property type="entry name" value="PRK05395.1-2"/>
    <property type="match status" value="1"/>
</dbReference>
<dbReference type="NCBIfam" id="NF003806">
    <property type="entry name" value="PRK05395.1-3"/>
    <property type="match status" value="1"/>
</dbReference>
<dbReference type="NCBIfam" id="NF003807">
    <property type="entry name" value="PRK05395.1-4"/>
    <property type="match status" value="1"/>
</dbReference>
<dbReference type="PANTHER" id="PTHR21272">
    <property type="entry name" value="CATABOLIC 3-DEHYDROQUINASE"/>
    <property type="match status" value="1"/>
</dbReference>
<dbReference type="PANTHER" id="PTHR21272:SF3">
    <property type="entry name" value="CATABOLIC 3-DEHYDROQUINASE"/>
    <property type="match status" value="1"/>
</dbReference>
<dbReference type="Pfam" id="PF01220">
    <property type="entry name" value="DHquinase_II"/>
    <property type="match status" value="1"/>
</dbReference>
<dbReference type="PIRSF" id="PIRSF001399">
    <property type="entry name" value="DHquinase_II"/>
    <property type="match status" value="1"/>
</dbReference>
<dbReference type="SUPFAM" id="SSF52304">
    <property type="entry name" value="Type II 3-dehydroquinate dehydratase"/>
    <property type="match status" value="1"/>
</dbReference>
<dbReference type="PROSITE" id="PS01029">
    <property type="entry name" value="DEHYDROQUINASE_II"/>
    <property type="match status" value="1"/>
</dbReference>
<reference key="1">
    <citation type="submission" date="2007-04" db="EMBL/GenBank/DDBJ databases">
        <title>Complete sequence of Roseiflexus sp. RS-1.</title>
        <authorList>
            <consortium name="US DOE Joint Genome Institute"/>
            <person name="Copeland A."/>
            <person name="Lucas S."/>
            <person name="Lapidus A."/>
            <person name="Barry K."/>
            <person name="Detter J.C."/>
            <person name="Glavina del Rio T."/>
            <person name="Hammon N."/>
            <person name="Israni S."/>
            <person name="Dalin E."/>
            <person name="Tice H."/>
            <person name="Pitluck S."/>
            <person name="Chertkov O."/>
            <person name="Brettin T."/>
            <person name="Bruce D."/>
            <person name="Han C."/>
            <person name="Schmutz J."/>
            <person name="Larimer F."/>
            <person name="Land M."/>
            <person name="Hauser L."/>
            <person name="Kyrpides N."/>
            <person name="Mikhailova N."/>
            <person name="Bryant D.A."/>
            <person name="Richardson P."/>
        </authorList>
    </citation>
    <scope>NUCLEOTIDE SEQUENCE [LARGE SCALE GENOMIC DNA]</scope>
    <source>
        <strain>RS-1</strain>
    </source>
</reference>